<keyword id="KW-0067">ATP-binding</keyword>
<keyword id="KW-0963">Cytoplasm</keyword>
<keyword id="KW-0217">Developmental protein</keyword>
<keyword id="KW-0418">Kinase</keyword>
<keyword id="KW-0460">Magnesium</keyword>
<keyword id="KW-0547">Nucleotide-binding</keyword>
<keyword id="KW-0552">Olfaction</keyword>
<keyword id="KW-0597">Phosphoprotein</keyword>
<keyword id="KW-1185">Reference proteome</keyword>
<keyword id="KW-0716">Sensory transduction</keyword>
<keyword id="KW-0723">Serine/threonine-protein kinase</keyword>
<keyword id="KW-0808">Transferase</keyword>
<keyword id="KW-0829">Tyrosine-protein kinase</keyword>
<dbReference type="EC" id="2.7.12.1" evidence="3"/>
<dbReference type="EMBL" id="HE601390">
    <property type="protein sequence ID" value="CAP20711.2"/>
    <property type="molecule type" value="Genomic_DNA"/>
</dbReference>
<dbReference type="SMR" id="A8WJR8"/>
<dbReference type="FunCoup" id="A8WJR8">
    <property type="interactions" value="144"/>
</dbReference>
<dbReference type="STRING" id="6238.A8WJR8"/>
<dbReference type="WormBase" id="CBG23998a">
    <property type="protein sequence ID" value="CBP43104"/>
    <property type="gene ID" value="WBGene00042214"/>
    <property type="gene designation" value="Cbr-mbk-2"/>
</dbReference>
<dbReference type="eggNOG" id="KOG0667">
    <property type="taxonomic scope" value="Eukaryota"/>
</dbReference>
<dbReference type="HOGENOM" id="CLU_018023_0_0_1"/>
<dbReference type="InParanoid" id="A8WJR8"/>
<dbReference type="OMA" id="CTATSMP"/>
<dbReference type="Proteomes" id="UP000008549">
    <property type="component" value="Unassembled WGS sequence"/>
</dbReference>
<dbReference type="GO" id="GO:0005938">
    <property type="term" value="C:cell cortex"/>
    <property type="evidence" value="ECO:0007669"/>
    <property type="project" value="UniProtKB-SubCell"/>
</dbReference>
<dbReference type="GO" id="GO:0005737">
    <property type="term" value="C:cytoplasm"/>
    <property type="evidence" value="ECO:0000318"/>
    <property type="project" value="GO_Central"/>
</dbReference>
<dbReference type="GO" id="GO:0005856">
    <property type="term" value="C:cytoskeleton"/>
    <property type="evidence" value="ECO:0000318"/>
    <property type="project" value="GO_Central"/>
</dbReference>
<dbReference type="GO" id="GO:0005634">
    <property type="term" value="C:nucleus"/>
    <property type="evidence" value="ECO:0000318"/>
    <property type="project" value="GO_Central"/>
</dbReference>
<dbReference type="GO" id="GO:0005524">
    <property type="term" value="F:ATP binding"/>
    <property type="evidence" value="ECO:0007669"/>
    <property type="project" value="UniProtKB-KW"/>
</dbReference>
<dbReference type="GO" id="GO:0106310">
    <property type="term" value="F:protein serine kinase activity"/>
    <property type="evidence" value="ECO:0007669"/>
    <property type="project" value="RHEA"/>
</dbReference>
<dbReference type="GO" id="GO:0004674">
    <property type="term" value="F:protein serine/threonine kinase activity"/>
    <property type="evidence" value="ECO:0000318"/>
    <property type="project" value="GO_Central"/>
</dbReference>
<dbReference type="GO" id="GO:0004712">
    <property type="term" value="F:protein serine/threonine/tyrosine kinase activity"/>
    <property type="evidence" value="ECO:0007669"/>
    <property type="project" value="UniProtKB-EC"/>
</dbReference>
<dbReference type="GO" id="GO:0004713">
    <property type="term" value="F:protein tyrosine kinase activity"/>
    <property type="evidence" value="ECO:0007669"/>
    <property type="project" value="UniProtKB-KW"/>
</dbReference>
<dbReference type="GO" id="GO:0007608">
    <property type="term" value="P:sensory perception of smell"/>
    <property type="evidence" value="ECO:0007669"/>
    <property type="project" value="UniProtKB-KW"/>
</dbReference>
<dbReference type="CDD" id="cd14224">
    <property type="entry name" value="PKc_DYRK2_3"/>
    <property type="match status" value="1"/>
</dbReference>
<dbReference type="FunFam" id="3.30.10.30:FF:000003">
    <property type="entry name" value="Dual specificity tyrosine-phosphorylation-regulated kinase mbk-2"/>
    <property type="match status" value="1"/>
</dbReference>
<dbReference type="FunFam" id="1.10.510.10:FF:000112">
    <property type="entry name" value="Putative dual specificity tyrosine-phosphorylation-regulated kinase 2"/>
    <property type="match status" value="1"/>
</dbReference>
<dbReference type="FunFam" id="3.30.200.20:FF:000127">
    <property type="entry name" value="Putative dual specificity tyrosine-phosphorylation-regulated kinase 2"/>
    <property type="match status" value="1"/>
</dbReference>
<dbReference type="Gene3D" id="3.30.10.30">
    <property type="entry name" value="DYRK"/>
    <property type="match status" value="1"/>
</dbReference>
<dbReference type="Gene3D" id="3.30.200.20">
    <property type="entry name" value="Phosphorylase Kinase, domain 1"/>
    <property type="match status" value="1"/>
</dbReference>
<dbReference type="Gene3D" id="1.10.510.10">
    <property type="entry name" value="Transferase(Phosphotransferase) domain 1"/>
    <property type="match status" value="1"/>
</dbReference>
<dbReference type="InterPro" id="IPR042521">
    <property type="entry name" value="DYRK"/>
</dbReference>
<dbReference type="InterPro" id="IPR011009">
    <property type="entry name" value="Kinase-like_dom_sf"/>
</dbReference>
<dbReference type="InterPro" id="IPR000719">
    <property type="entry name" value="Prot_kinase_dom"/>
</dbReference>
<dbReference type="InterPro" id="IPR017441">
    <property type="entry name" value="Protein_kinase_ATP_BS"/>
</dbReference>
<dbReference type="InterPro" id="IPR008271">
    <property type="entry name" value="Ser/Thr_kinase_AS"/>
</dbReference>
<dbReference type="InterPro" id="IPR050494">
    <property type="entry name" value="Ser_Thr_dual-spec_kinase"/>
</dbReference>
<dbReference type="PANTHER" id="PTHR24058">
    <property type="entry name" value="DUAL SPECIFICITY PROTEIN KINASE"/>
    <property type="match status" value="1"/>
</dbReference>
<dbReference type="PANTHER" id="PTHR24058:SF112">
    <property type="entry name" value="DUAL SPECIFICITY TYROSINE-PHOSPHORYLATION-REGULATED KINASE 3 HOMOLOG-RELATED"/>
    <property type="match status" value="1"/>
</dbReference>
<dbReference type="Pfam" id="PF00069">
    <property type="entry name" value="Pkinase"/>
    <property type="match status" value="1"/>
</dbReference>
<dbReference type="SMART" id="SM00220">
    <property type="entry name" value="S_TKc"/>
    <property type="match status" value="1"/>
</dbReference>
<dbReference type="SUPFAM" id="SSF56112">
    <property type="entry name" value="Protein kinase-like (PK-like)"/>
    <property type="match status" value="1"/>
</dbReference>
<dbReference type="PROSITE" id="PS00107">
    <property type="entry name" value="PROTEIN_KINASE_ATP"/>
    <property type="match status" value="1"/>
</dbReference>
<dbReference type="PROSITE" id="PS50011">
    <property type="entry name" value="PROTEIN_KINASE_DOM"/>
    <property type="match status" value="1"/>
</dbReference>
<dbReference type="PROSITE" id="PS00108">
    <property type="entry name" value="PROTEIN_KINASE_ST"/>
    <property type="match status" value="1"/>
</dbReference>
<accession>A8WJR8</accession>
<proteinExistence type="inferred from homology"/>
<feature type="chain" id="PRO_0000390716" description="Dual specificity tyrosine-phosphorylation-regulated kinase mbk-2">
    <location>
        <begin position="1"/>
        <end position="815"/>
    </location>
</feature>
<feature type="domain" description="Protein kinase" evidence="5">
    <location>
        <begin position="460"/>
        <end position="773"/>
    </location>
</feature>
<feature type="region of interest" description="Disordered" evidence="7">
    <location>
        <begin position="1"/>
        <end position="49"/>
    </location>
</feature>
<feature type="region of interest" description="Disordered" evidence="7">
    <location>
        <begin position="67"/>
        <end position="146"/>
    </location>
</feature>
<feature type="region of interest" description="Disordered" evidence="7">
    <location>
        <begin position="185"/>
        <end position="204"/>
    </location>
</feature>
<feature type="region of interest" description="Disordered" evidence="7">
    <location>
        <begin position="298"/>
        <end position="395"/>
    </location>
</feature>
<feature type="compositionally biased region" description="Polar residues" evidence="7">
    <location>
        <begin position="7"/>
        <end position="25"/>
    </location>
</feature>
<feature type="compositionally biased region" description="Polar residues" evidence="7">
    <location>
        <begin position="40"/>
        <end position="49"/>
    </location>
</feature>
<feature type="compositionally biased region" description="Low complexity" evidence="7">
    <location>
        <begin position="68"/>
        <end position="78"/>
    </location>
</feature>
<feature type="compositionally biased region" description="Polar residues" evidence="7">
    <location>
        <begin position="119"/>
        <end position="140"/>
    </location>
</feature>
<feature type="compositionally biased region" description="Polar residues" evidence="7">
    <location>
        <begin position="190"/>
        <end position="204"/>
    </location>
</feature>
<feature type="compositionally biased region" description="Low complexity" evidence="7">
    <location>
        <begin position="301"/>
        <end position="316"/>
    </location>
</feature>
<feature type="compositionally biased region" description="Polar residues" evidence="7">
    <location>
        <begin position="325"/>
        <end position="351"/>
    </location>
</feature>
<feature type="compositionally biased region" description="Low complexity" evidence="7">
    <location>
        <begin position="363"/>
        <end position="391"/>
    </location>
</feature>
<feature type="active site" description="Proton acceptor" evidence="1 5 6">
    <location>
        <position position="586"/>
    </location>
</feature>
<feature type="binding site" evidence="1 5">
    <location>
        <begin position="466"/>
        <end position="474"/>
    </location>
    <ligand>
        <name>ATP</name>
        <dbReference type="ChEBI" id="CHEBI:30616"/>
    </ligand>
</feature>
<feature type="binding site" evidence="3 5">
    <location>
        <position position="489"/>
    </location>
    <ligand>
        <name>ATP</name>
        <dbReference type="ChEBI" id="CHEBI:30616"/>
    </ligand>
</feature>
<feature type="modified residue" description="Phosphoserine; by cdk-1" evidence="3">
    <location>
        <position position="361"/>
    </location>
</feature>
<feature type="modified residue" description="Phosphotyrosine; by autocatalysis" evidence="3">
    <location>
        <position position="620"/>
    </location>
</feature>
<name>MBK2_CAEBR</name>
<comment type="function">
    <text evidence="3">Required for oocyte-to-zygote transition in which it phosphorylates oocyte proteins, including mei-1, oma-1, oma-2, mex-5, and mex-6, modifying their activity and/or stability following meiosis. Through phosphorylation of P granule components including meg-1, promotes the disassembly of zygotic P granules in the anterior cytoplasm during zygote polarization, and thus plays a role in P granule distribution and segregation in early stage embryos following meiosis (By similarity). Functions in both spindle positioning and in the posterior localization of cytoplasmic determinants, including pie-1, pos-1, and pgl-1, in early embryos. Involved in the asymmetric distribution of plk-1 at the 2-cell embryonic stage.</text>
</comment>
<comment type="catalytic activity">
    <reaction evidence="3">
        <text>L-seryl-[protein] + ATP = O-phospho-L-seryl-[protein] + ADP + H(+)</text>
        <dbReference type="Rhea" id="RHEA:17989"/>
        <dbReference type="Rhea" id="RHEA-COMP:9863"/>
        <dbReference type="Rhea" id="RHEA-COMP:11604"/>
        <dbReference type="ChEBI" id="CHEBI:15378"/>
        <dbReference type="ChEBI" id="CHEBI:29999"/>
        <dbReference type="ChEBI" id="CHEBI:30616"/>
        <dbReference type="ChEBI" id="CHEBI:83421"/>
        <dbReference type="ChEBI" id="CHEBI:456216"/>
        <dbReference type="EC" id="2.7.12.1"/>
    </reaction>
</comment>
<comment type="catalytic activity">
    <reaction evidence="3">
        <text>L-threonyl-[protein] + ATP = O-phospho-L-threonyl-[protein] + ADP + H(+)</text>
        <dbReference type="Rhea" id="RHEA:46608"/>
        <dbReference type="Rhea" id="RHEA-COMP:11060"/>
        <dbReference type="Rhea" id="RHEA-COMP:11605"/>
        <dbReference type="ChEBI" id="CHEBI:15378"/>
        <dbReference type="ChEBI" id="CHEBI:30013"/>
        <dbReference type="ChEBI" id="CHEBI:30616"/>
        <dbReference type="ChEBI" id="CHEBI:61977"/>
        <dbReference type="ChEBI" id="CHEBI:456216"/>
        <dbReference type="EC" id="2.7.12.1"/>
    </reaction>
</comment>
<comment type="catalytic activity">
    <reaction evidence="3">
        <text>L-tyrosyl-[protein] + ATP = O-phospho-L-tyrosyl-[protein] + ADP + H(+)</text>
        <dbReference type="Rhea" id="RHEA:10596"/>
        <dbReference type="Rhea" id="RHEA-COMP:10136"/>
        <dbReference type="Rhea" id="RHEA-COMP:20101"/>
        <dbReference type="ChEBI" id="CHEBI:15378"/>
        <dbReference type="ChEBI" id="CHEBI:30616"/>
        <dbReference type="ChEBI" id="CHEBI:46858"/>
        <dbReference type="ChEBI" id="CHEBI:61978"/>
        <dbReference type="ChEBI" id="CHEBI:456216"/>
        <dbReference type="EC" id="2.7.12.1"/>
    </reaction>
</comment>
<comment type="cofactor">
    <cofactor evidence="3">
        <name>Mg(2+)</name>
        <dbReference type="ChEBI" id="CHEBI:18420"/>
    </cofactor>
</comment>
<comment type="activity regulation">
    <text evidence="3">Activated during oocyte maturation by phosphorylation on Ser-361 by cdk-1. The pseudotyrosine phosphatases egg-4 and egg-5 sequester activated mbk-2 until the meiotic divisions and inhibit mbk-2 kinase activity directly, using a mixed-inhibition mechanism that does not involve tyrosine dephosphorylation (By similarity).</text>
</comment>
<comment type="subunit">
    <text evidence="3">Part of a complex, consisting of pseudophosphatases egg-3, egg-4, egg-5 and kinase mbk-2. Interacts (via Tyr-618 and Tyr-620) with egg-4 (via tyrosine-protein phosphatase domain) and egg-5 (via tyrosine-protein phosphatase domain); mbk-2 tyrosine phosphorylation enhances the interaction. The interaction inhibits mbk-2 kinase activity and is required for mbk-2 oocyte cortex localization. Interacts (via N-terminus) with egg-3 (via tyrosine-protein phosphatase domain); the interaction does not affect mbk-2 kinase activity, is enhanced by mbk-2 tyrosine phosphorylation status and requires prior binding of mbk-2 to egg-4 and egg-5.</text>
</comment>
<comment type="subcellular location">
    <subcellularLocation>
        <location evidence="3">Cytoplasm</location>
        <location evidence="3">Cell cortex</location>
    </subcellularLocation>
    <text evidence="3">Maintained at the cortex by the cortical anchor egg-3 before meiotic divisions. During anaphase of meiosis I, egg-3 translocates into the cytoplasm on vesicles and is slowly degraded, releasing mbk-2 (By similarity).</text>
</comment>
<comment type="PTM">
    <text evidence="3">Autophosphorylated.</text>
</comment>
<comment type="similarity">
    <text evidence="4">Belongs to the protein kinase superfamily. CMGC Ser/Thr protein kinase family. MNB/DYRK subfamily.</text>
</comment>
<reference evidence="8" key="1">
    <citation type="journal article" date="2003" name="PLoS Biol.">
        <title>The genome sequence of Caenorhabditis briggsae: a platform for comparative genomics.</title>
        <authorList>
            <person name="Stein L.D."/>
            <person name="Bao Z."/>
            <person name="Blasiar D."/>
            <person name="Blumenthal T."/>
            <person name="Brent M.R."/>
            <person name="Chen N."/>
            <person name="Chinwalla A."/>
            <person name="Clarke L."/>
            <person name="Clee C."/>
            <person name="Coghlan A."/>
            <person name="Coulson A."/>
            <person name="D'Eustachio P."/>
            <person name="Fitch D.H.A."/>
            <person name="Fulton L.A."/>
            <person name="Fulton R.E."/>
            <person name="Griffiths-Jones S."/>
            <person name="Harris T.W."/>
            <person name="Hillier L.W."/>
            <person name="Kamath R."/>
            <person name="Kuwabara P.E."/>
            <person name="Mardis E.R."/>
            <person name="Marra M.A."/>
            <person name="Miner T.L."/>
            <person name="Minx P."/>
            <person name="Mullikin J.C."/>
            <person name="Plumb R.W."/>
            <person name="Rogers J."/>
            <person name="Schein J.E."/>
            <person name="Sohrmann M."/>
            <person name="Spieth J."/>
            <person name="Stajich J.E."/>
            <person name="Wei C."/>
            <person name="Willey D."/>
            <person name="Wilson R.K."/>
            <person name="Durbin R.M."/>
            <person name="Waterston R.H."/>
        </authorList>
    </citation>
    <scope>NUCLEOTIDE SEQUENCE [LARGE SCALE GENOMIC DNA]</scope>
    <source>
        <strain evidence="8">AF16</strain>
    </source>
</reference>
<evidence type="ECO:0000250" key="1">
    <source>
        <dbReference type="UniProtKB" id="P28523"/>
    </source>
</evidence>
<evidence type="ECO:0000250" key="2">
    <source>
        <dbReference type="UniProtKB" id="Q13627"/>
    </source>
</evidence>
<evidence type="ECO:0000250" key="3">
    <source>
        <dbReference type="UniProtKB" id="Q9XTF3"/>
    </source>
</evidence>
<evidence type="ECO:0000255" key="4"/>
<evidence type="ECO:0000255" key="5">
    <source>
        <dbReference type="PROSITE-ProRule" id="PRU00159"/>
    </source>
</evidence>
<evidence type="ECO:0000255" key="6">
    <source>
        <dbReference type="PROSITE-ProRule" id="PRU10027"/>
    </source>
</evidence>
<evidence type="ECO:0000256" key="7">
    <source>
        <dbReference type="SAM" id="MobiDB-lite"/>
    </source>
</evidence>
<evidence type="ECO:0000312" key="8">
    <source>
        <dbReference type="EMBL" id="CAP20711.2"/>
    </source>
</evidence>
<evidence type="ECO:0000312" key="9">
    <source>
        <dbReference type="WormBase" id="CBG23998a"/>
    </source>
</evidence>
<protein>
    <recommendedName>
        <fullName evidence="2">Dual specificity tyrosine-phosphorylation-regulated kinase mbk-2</fullName>
        <ecNumber evidence="3">2.7.12.1</ecNumber>
    </recommendedName>
    <alternativeName>
        <fullName evidence="2">Dual specificity Yak1-related kinase mbk-2</fullName>
    </alternativeName>
    <alternativeName>
        <fullName evidence="3">Minibrain Kinase 2</fullName>
    </alternativeName>
</protein>
<gene>
    <name evidence="9" type="primary">mbk-2</name>
    <name evidence="9" type="ORF">CBG23998</name>
</gene>
<organism>
    <name type="scientific">Caenorhabditis briggsae</name>
    <dbReference type="NCBI Taxonomy" id="6238"/>
    <lineage>
        <taxon>Eukaryota</taxon>
        <taxon>Metazoa</taxon>
        <taxon>Ecdysozoa</taxon>
        <taxon>Nematoda</taxon>
        <taxon>Chromadorea</taxon>
        <taxon>Rhabditida</taxon>
        <taxon>Rhabditina</taxon>
        <taxon>Rhabditomorpha</taxon>
        <taxon>Rhabditoidea</taxon>
        <taxon>Rhabditidae</taxon>
        <taxon>Peloderinae</taxon>
        <taxon>Caenorhabditis</taxon>
    </lineage>
</organism>
<sequence>MAALASFTRNSRSYGQQPIDVTQQGQRDRSVMSLDAQGRSKMSNINYTRPAALSTSDSTIGVFRRAPSSFSGASSSSSNHHHPVYHSHNSLPPTLIGGSPHSASSNSLAQGHRNPALGSGNTLTRSYHQPSSTNSSTSNLHGPLGTYSRDLKQAIRDISPPVINSSANPHLVNYIHTSSFDNGSYEFPSGQAQQQRRLGGSQQHLAPLQQTSSSLYSNPQSSSSQLLGQQAVRSNYAYQQSLPRQQHINSHQTQAFFGTIRAPGNSTNIVTPLRASKTMIDVLAPVRDSVAAQATTGALPSVGTSSSNGSSNSSSGVGSGGSGSLMTQSIGGPNKHLSASHSTLNTASTHDSMMHTKIPKSPSNESLSRSHTSSSGGSQGGHNSNSGSNSGFRPEDAVQTFGAKLVPYEKNEIYNYTRVFFVGSHAKKQPGVIGGANNGGYDDENGSYQLVVHDHIAYRYEVLKVIGKGSFGQVIKAFDHKYQQYVALKLVRNEKRFHRQADEEIRILDHLRRQDSDGTHNIIHMLDYFNFRNHKCITFELLSINLYELIKRNKFQGFSLMLVRKFAYSMLLCLDLLQKNRLIHCDLKPENVLLKQQGRSGIKVIDFGSSCFDDQRIYTYIQSRFYRAPEVILGTKYGMPIDMWSLGCILAELLTGYPLLPGEDENDQLALIIELLGMPPPKSLETAKRARTFITSKGYPRYCTATSMPDGSVVLAGARSKRGKMRGPPESRSWSTALKNMGDELFVDFLKRCLDWDPETRMTPAQALKHKWLRRRLPNPPRDGMDSMGGLADHDKKADLPNIDSNANILMRKKF</sequence>